<feature type="chain" id="PRO_1000215070" description="Large ribosomal subunit protein uL30">
    <location>
        <begin position="1"/>
        <end position="58"/>
    </location>
</feature>
<dbReference type="EMBL" id="AM181176">
    <property type="protein sequence ID" value="CAY52734.1"/>
    <property type="molecule type" value="Genomic_DNA"/>
</dbReference>
<dbReference type="RefSeq" id="WP_003176408.1">
    <property type="nucleotide sequence ID" value="NC_012660.1"/>
</dbReference>
<dbReference type="SMR" id="C3K2V8"/>
<dbReference type="STRING" id="294.SRM1_05161"/>
<dbReference type="GeneID" id="97919480"/>
<dbReference type="eggNOG" id="COG1841">
    <property type="taxonomic scope" value="Bacteria"/>
</dbReference>
<dbReference type="HOGENOM" id="CLU_131047_1_4_6"/>
<dbReference type="OrthoDB" id="9812790at2"/>
<dbReference type="GO" id="GO:0022625">
    <property type="term" value="C:cytosolic large ribosomal subunit"/>
    <property type="evidence" value="ECO:0007669"/>
    <property type="project" value="TreeGrafter"/>
</dbReference>
<dbReference type="GO" id="GO:0003735">
    <property type="term" value="F:structural constituent of ribosome"/>
    <property type="evidence" value="ECO:0007669"/>
    <property type="project" value="InterPro"/>
</dbReference>
<dbReference type="GO" id="GO:0006412">
    <property type="term" value="P:translation"/>
    <property type="evidence" value="ECO:0007669"/>
    <property type="project" value="UniProtKB-UniRule"/>
</dbReference>
<dbReference type="CDD" id="cd01658">
    <property type="entry name" value="Ribosomal_L30"/>
    <property type="match status" value="1"/>
</dbReference>
<dbReference type="FunFam" id="3.30.1390.20:FF:000001">
    <property type="entry name" value="50S ribosomal protein L30"/>
    <property type="match status" value="1"/>
</dbReference>
<dbReference type="Gene3D" id="3.30.1390.20">
    <property type="entry name" value="Ribosomal protein L30, ferredoxin-like fold domain"/>
    <property type="match status" value="1"/>
</dbReference>
<dbReference type="HAMAP" id="MF_01371_B">
    <property type="entry name" value="Ribosomal_uL30_B"/>
    <property type="match status" value="1"/>
</dbReference>
<dbReference type="InterPro" id="IPR036919">
    <property type="entry name" value="Ribo_uL30_ferredoxin-like_sf"/>
</dbReference>
<dbReference type="InterPro" id="IPR005996">
    <property type="entry name" value="Ribosomal_uL30_bac-type"/>
</dbReference>
<dbReference type="InterPro" id="IPR016082">
    <property type="entry name" value="Ribosomal_uL30_ferredoxin-like"/>
</dbReference>
<dbReference type="NCBIfam" id="TIGR01308">
    <property type="entry name" value="rpmD_bact"/>
    <property type="match status" value="1"/>
</dbReference>
<dbReference type="PANTHER" id="PTHR15892:SF2">
    <property type="entry name" value="LARGE RIBOSOMAL SUBUNIT PROTEIN UL30M"/>
    <property type="match status" value="1"/>
</dbReference>
<dbReference type="PANTHER" id="PTHR15892">
    <property type="entry name" value="MITOCHONDRIAL RIBOSOMAL PROTEIN L30"/>
    <property type="match status" value="1"/>
</dbReference>
<dbReference type="Pfam" id="PF00327">
    <property type="entry name" value="Ribosomal_L30"/>
    <property type="match status" value="1"/>
</dbReference>
<dbReference type="PIRSF" id="PIRSF002211">
    <property type="entry name" value="Ribosomal_L30_bac-type"/>
    <property type="match status" value="1"/>
</dbReference>
<dbReference type="SUPFAM" id="SSF55129">
    <property type="entry name" value="Ribosomal protein L30p/L7e"/>
    <property type="match status" value="1"/>
</dbReference>
<evidence type="ECO:0000255" key="1">
    <source>
        <dbReference type="HAMAP-Rule" id="MF_01371"/>
    </source>
</evidence>
<evidence type="ECO:0000305" key="2"/>
<organism>
    <name type="scientific">Pseudomonas fluorescens (strain SBW25)</name>
    <dbReference type="NCBI Taxonomy" id="216595"/>
    <lineage>
        <taxon>Bacteria</taxon>
        <taxon>Pseudomonadati</taxon>
        <taxon>Pseudomonadota</taxon>
        <taxon>Gammaproteobacteria</taxon>
        <taxon>Pseudomonadales</taxon>
        <taxon>Pseudomonadaceae</taxon>
        <taxon>Pseudomonas</taxon>
    </lineage>
</organism>
<reference key="1">
    <citation type="journal article" date="2009" name="Genome Biol.">
        <title>Genomic and genetic analyses of diversity and plant interactions of Pseudomonas fluorescens.</title>
        <authorList>
            <person name="Silby M.W."/>
            <person name="Cerdeno-Tarraga A.M."/>
            <person name="Vernikos G.S."/>
            <person name="Giddens S.R."/>
            <person name="Jackson R.W."/>
            <person name="Preston G.M."/>
            <person name="Zhang X.-X."/>
            <person name="Moon C.D."/>
            <person name="Gehrig S.M."/>
            <person name="Godfrey S.A.C."/>
            <person name="Knight C.G."/>
            <person name="Malone J.G."/>
            <person name="Robinson Z."/>
            <person name="Spiers A.J."/>
            <person name="Harris S."/>
            <person name="Challis G.L."/>
            <person name="Yaxley A.M."/>
            <person name="Harris D."/>
            <person name="Seeger K."/>
            <person name="Murphy L."/>
            <person name="Rutter S."/>
            <person name="Squares R."/>
            <person name="Quail M.A."/>
            <person name="Saunders E."/>
            <person name="Mavromatis K."/>
            <person name="Brettin T.S."/>
            <person name="Bentley S.D."/>
            <person name="Hothersall J."/>
            <person name="Stephens E."/>
            <person name="Thomas C.M."/>
            <person name="Parkhill J."/>
            <person name="Levy S.B."/>
            <person name="Rainey P.B."/>
            <person name="Thomson N.R."/>
        </authorList>
    </citation>
    <scope>NUCLEOTIDE SEQUENCE [LARGE SCALE GENOMIC DNA]</scope>
    <source>
        <strain>SBW25</strain>
    </source>
</reference>
<sequence length="58" mass="6526">MATVKVTLIKSMTGRIPNHKLCVKGLGLRRIGHTVEVQDTPENRGMINKAYYMLRVEG</sequence>
<accession>C3K2V8</accession>
<proteinExistence type="inferred from homology"/>
<name>RL30_PSEFS</name>
<comment type="subunit">
    <text evidence="1">Part of the 50S ribosomal subunit.</text>
</comment>
<comment type="similarity">
    <text evidence="1">Belongs to the universal ribosomal protein uL30 family.</text>
</comment>
<gene>
    <name evidence="1" type="primary">rpmD</name>
    <name type="ordered locus">PFLU_5509</name>
</gene>
<keyword id="KW-0687">Ribonucleoprotein</keyword>
<keyword id="KW-0689">Ribosomal protein</keyword>
<protein>
    <recommendedName>
        <fullName evidence="1">Large ribosomal subunit protein uL30</fullName>
    </recommendedName>
    <alternativeName>
        <fullName evidence="2">50S ribosomal protein L30</fullName>
    </alternativeName>
</protein>